<evidence type="ECO:0000255" key="1">
    <source>
        <dbReference type="HAMAP-Rule" id="MF_00377"/>
    </source>
</evidence>
<comment type="function">
    <text evidence="1">Plays an essential role in the initiation and regulation of chromosomal replication. ATP-DnaA binds to the origin of replication (oriC) to initiate formation of the DNA replication initiation complex once per cell cycle. Binds the DnaA box (a 9 base pair repeat at the origin) and separates the double-stranded (ds)DNA. Forms a right-handed helical filament on oriC DNA; dsDNA binds to the exterior of the filament while single-stranded (ss)DNA is stabiized in the filament's interior. The ATP-DnaA-oriC complex binds and stabilizes one strand of the AT-rich DNA unwinding element (DUE), permitting loading of DNA polymerase. After initiation quickly degrades to an ADP-DnaA complex that is not apt for DNA replication. Binds acidic phospholipids.</text>
</comment>
<comment type="subunit">
    <text evidence="1">Oligomerizes as a right-handed, spiral filament on DNA at oriC.</text>
</comment>
<comment type="subcellular location">
    <subcellularLocation>
        <location evidence="1">Cytoplasm</location>
    </subcellularLocation>
</comment>
<comment type="domain">
    <text evidence="1">Domain I is involved in oligomerization and binding regulators, domain II is flexibile and of varying length in different bacteria, domain III forms the AAA+ region, while domain IV binds dsDNA.</text>
</comment>
<comment type="similarity">
    <text evidence="1">Belongs to the DnaA family.</text>
</comment>
<gene>
    <name evidence="1" type="primary">dnaA</name>
    <name type="ordered locus">Cyan7425_0198</name>
</gene>
<dbReference type="EMBL" id="CP001344">
    <property type="protein sequence ID" value="ACL42594.1"/>
    <property type="molecule type" value="Genomic_DNA"/>
</dbReference>
<dbReference type="SMR" id="B8HRT5"/>
<dbReference type="STRING" id="395961.Cyan7425_0198"/>
<dbReference type="KEGG" id="cyn:Cyan7425_0198"/>
<dbReference type="eggNOG" id="COG0593">
    <property type="taxonomic scope" value="Bacteria"/>
</dbReference>
<dbReference type="HOGENOM" id="CLU_026910_3_1_3"/>
<dbReference type="OrthoDB" id="9807019at2"/>
<dbReference type="GO" id="GO:0005737">
    <property type="term" value="C:cytoplasm"/>
    <property type="evidence" value="ECO:0007669"/>
    <property type="project" value="UniProtKB-SubCell"/>
</dbReference>
<dbReference type="GO" id="GO:0005886">
    <property type="term" value="C:plasma membrane"/>
    <property type="evidence" value="ECO:0007669"/>
    <property type="project" value="TreeGrafter"/>
</dbReference>
<dbReference type="GO" id="GO:0005524">
    <property type="term" value="F:ATP binding"/>
    <property type="evidence" value="ECO:0007669"/>
    <property type="project" value="UniProtKB-UniRule"/>
</dbReference>
<dbReference type="GO" id="GO:0016887">
    <property type="term" value="F:ATP hydrolysis activity"/>
    <property type="evidence" value="ECO:0007669"/>
    <property type="project" value="InterPro"/>
</dbReference>
<dbReference type="GO" id="GO:0003688">
    <property type="term" value="F:DNA replication origin binding"/>
    <property type="evidence" value="ECO:0007669"/>
    <property type="project" value="UniProtKB-UniRule"/>
</dbReference>
<dbReference type="GO" id="GO:0008289">
    <property type="term" value="F:lipid binding"/>
    <property type="evidence" value="ECO:0007669"/>
    <property type="project" value="UniProtKB-KW"/>
</dbReference>
<dbReference type="GO" id="GO:0006270">
    <property type="term" value="P:DNA replication initiation"/>
    <property type="evidence" value="ECO:0007669"/>
    <property type="project" value="UniProtKB-UniRule"/>
</dbReference>
<dbReference type="GO" id="GO:0006275">
    <property type="term" value="P:regulation of DNA replication"/>
    <property type="evidence" value="ECO:0007669"/>
    <property type="project" value="UniProtKB-UniRule"/>
</dbReference>
<dbReference type="CDD" id="cd00009">
    <property type="entry name" value="AAA"/>
    <property type="match status" value="1"/>
</dbReference>
<dbReference type="CDD" id="cd06571">
    <property type="entry name" value="Bac_DnaA_C"/>
    <property type="match status" value="1"/>
</dbReference>
<dbReference type="FunFam" id="1.10.8.60:FF:000003">
    <property type="entry name" value="Chromosomal replication initiator protein DnaA"/>
    <property type="match status" value="1"/>
</dbReference>
<dbReference type="FunFam" id="3.40.50.300:FF:000150">
    <property type="entry name" value="Chromosomal replication initiator protein DnaA"/>
    <property type="match status" value="1"/>
</dbReference>
<dbReference type="Gene3D" id="1.10.1750.10">
    <property type="match status" value="1"/>
</dbReference>
<dbReference type="Gene3D" id="1.10.8.60">
    <property type="match status" value="1"/>
</dbReference>
<dbReference type="Gene3D" id="3.30.300.180">
    <property type="match status" value="1"/>
</dbReference>
<dbReference type="Gene3D" id="3.40.50.300">
    <property type="entry name" value="P-loop containing nucleotide triphosphate hydrolases"/>
    <property type="match status" value="1"/>
</dbReference>
<dbReference type="HAMAP" id="MF_00377">
    <property type="entry name" value="DnaA_bact"/>
    <property type="match status" value="1"/>
</dbReference>
<dbReference type="InterPro" id="IPR003593">
    <property type="entry name" value="AAA+_ATPase"/>
</dbReference>
<dbReference type="InterPro" id="IPR001957">
    <property type="entry name" value="Chromosome_initiator_DnaA"/>
</dbReference>
<dbReference type="InterPro" id="IPR020591">
    <property type="entry name" value="Chromosome_initiator_DnaA-like"/>
</dbReference>
<dbReference type="InterPro" id="IPR018312">
    <property type="entry name" value="Chromosome_initiator_DnaA_CS"/>
</dbReference>
<dbReference type="InterPro" id="IPR013159">
    <property type="entry name" value="DnaA_C"/>
</dbReference>
<dbReference type="InterPro" id="IPR013317">
    <property type="entry name" value="DnaA_dom"/>
</dbReference>
<dbReference type="InterPro" id="IPR024633">
    <property type="entry name" value="DnaA_N_dom"/>
</dbReference>
<dbReference type="InterPro" id="IPR038454">
    <property type="entry name" value="DnaA_N_sf"/>
</dbReference>
<dbReference type="InterPro" id="IPR027417">
    <property type="entry name" value="P-loop_NTPase"/>
</dbReference>
<dbReference type="InterPro" id="IPR010921">
    <property type="entry name" value="Trp_repressor/repl_initiator"/>
</dbReference>
<dbReference type="NCBIfam" id="TIGR00362">
    <property type="entry name" value="DnaA"/>
    <property type="match status" value="1"/>
</dbReference>
<dbReference type="PANTHER" id="PTHR30050">
    <property type="entry name" value="CHROMOSOMAL REPLICATION INITIATOR PROTEIN DNAA"/>
    <property type="match status" value="1"/>
</dbReference>
<dbReference type="PANTHER" id="PTHR30050:SF2">
    <property type="entry name" value="CHROMOSOMAL REPLICATION INITIATOR PROTEIN DNAA"/>
    <property type="match status" value="1"/>
</dbReference>
<dbReference type="Pfam" id="PF00308">
    <property type="entry name" value="Bac_DnaA"/>
    <property type="match status" value="1"/>
</dbReference>
<dbReference type="Pfam" id="PF08299">
    <property type="entry name" value="Bac_DnaA_C"/>
    <property type="match status" value="1"/>
</dbReference>
<dbReference type="Pfam" id="PF11638">
    <property type="entry name" value="DnaA_N"/>
    <property type="match status" value="1"/>
</dbReference>
<dbReference type="PRINTS" id="PR00051">
    <property type="entry name" value="DNAA"/>
</dbReference>
<dbReference type="SMART" id="SM00382">
    <property type="entry name" value="AAA"/>
    <property type="match status" value="1"/>
</dbReference>
<dbReference type="SMART" id="SM00760">
    <property type="entry name" value="Bac_DnaA_C"/>
    <property type="match status" value="1"/>
</dbReference>
<dbReference type="SUPFAM" id="SSF52540">
    <property type="entry name" value="P-loop containing nucleoside triphosphate hydrolases"/>
    <property type="match status" value="1"/>
</dbReference>
<dbReference type="SUPFAM" id="SSF48295">
    <property type="entry name" value="TrpR-like"/>
    <property type="match status" value="1"/>
</dbReference>
<dbReference type="PROSITE" id="PS01008">
    <property type="entry name" value="DNAA"/>
    <property type="match status" value="1"/>
</dbReference>
<name>DNAA_CYAP4</name>
<organism>
    <name type="scientific">Cyanothece sp. (strain PCC 7425 / ATCC 29141)</name>
    <dbReference type="NCBI Taxonomy" id="395961"/>
    <lineage>
        <taxon>Bacteria</taxon>
        <taxon>Bacillati</taxon>
        <taxon>Cyanobacteriota</taxon>
        <taxon>Cyanophyceae</taxon>
        <taxon>Gomontiellales</taxon>
        <taxon>Cyanothecaceae</taxon>
        <taxon>Cyanothece</taxon>
    </lineage>
</organism>
<accession>B8HRT5</accession>
<proteinExistence type="inferred from homology"/>
<keyword id="KW-0067">ATP-binding</keyword>
<keyword id="KW-0963">Cytoplasm</keyword>
<keyword id="KW-0235">DNA replication</keyword>
<keyword id="KW-0238">DNA-binding</keyword>
<keyword id="KW-0446">Lipid-binding</keyword>
<keyword id="KW-0547">Nucleotide-binding</keyword>
<sequence length="460" mass="51998">MDISLESLWNQILERLQLQLSRPTFETWIKTATAEAFTEDRLTIRTPNPFARNWIQKYYLKTIADVAHDILGHPVDVQLVIAEGEETPSSEETDLGFAFPPLFRNPSPAPAPQRERMSDLNPKYVFSRYVVGPNNRMAHAACLAVAESPGREFNPLFLCGGVGLGKTHLMQAIGHYRLEICPDSKIFYVSTEQFTNDLIAAIRKDSMQSFREHYRAVDVMLVDDIQFIEGKEYTQEEFFHTFNTLHEAGKQVVLASDRPPSQIPRLQERLCSRFSMGLIADIQPPDLETRMAILQKKAEYENIRLPREVIEYIASSYTSNIRELEGALIRAVAYISISGLPMTVENIAPVLTPTTAKLEASPQTILLAVSDTFGIPIEDLKGNSRRREISVARQVGMYLMRQHTGLSLPKIGEEFGGKDHTTVLYSCEKVADLQRTDPEIAQTLRQLSDRINLASRQTEN</sequence>
<reference key="1">
    <citation type="journal article" date="2011" name="MBio">
        <title>Novel metabolic attributes of the genus Cyanothece, comprising a group of unicellular nitrogen-fixing Cyanobacteria.</title>
        <authorList>
            <person name="Bandyopadhyay A."/>
            <person name="Elvitigala T."/>
            <person name="Welsh E."/>
            <person name="Stockel J."/>
            <person name="Liberton M."/>
            <person name="Min H."/>
            <person name="Sherman L.A."/>
            <person name="Pakrasi H.B."/>
        </authorList>
    </citation>
    <scope>NUCLEOTIDE SEQUENCE [LARGE SCALE GENOMIC DNA]</scope>
    <source>
        <strain>PCC 7425 / ATCC 29141</strain>
    </source>
</reference>
<protein>
    <recommendedName>
        <fullName evidence="1">Chromosomal replication initiator protein DnaA</fullName>
    </recommendedName>
</protein>
<feature type="chain" id="PRO_1000189794" description="Chromosomal replication initiator protein DnaA">
    <location>
        <begin position="1"/>
        <end position="460"/>
    </location>
</feature>
<feature type="region of interest" description="Domain I, interacts with DnaA modulators" evidence="1">
    <location>
        <begin position="1"/>
        <end position="75"/>
    </location>
</feature>
<feature type="region of interest" description="Domain II" evidence="1">
    <location>
        <begin position="75"/>
        <end position="118"/>
    </location>
</feature>
<feature type="region of interest" description="Domain III, AAA+ region" evidence="1">
    <location>
        <begin position="119"/>
        <end position="335"/>
    </location>
</feature>
<feature type="region of interest" description="Domain IV, binds dsDNA" evidence="1">
    <location>
        <begin position="336"/>
        <end position="460"/>
    </location>
</feature>
<feature type="binding site" evidence="1">
    <location>
        <position position="163"/>
    </location>
    <ligand>
        <name>ATP</name>
        <dbReference type="ChEBI" id="CHEBI:30616"/>
    </ligand>
</feature>
<feature type="binding site" evidence="1">
    <location>
        <position position="165"/>
    </location>
    <ligand>
        <name>ATP</name>
        <dbReference type="ChEBI" id="CHEBI:30616"/>
    </ligand>
</feature>
<feature type="binding site" evidence="1">
    <location>
        <position position="166"/>
    </location>
    <ligand>
        <name>ATP</name>
        <dbReference type="ChEBI" id="CHEBI:30616"/>
    </ligand>
</feature>
<feature type="binding site" evidence="1">
    <location>
        <position position="167"/>
    </location>
    <ligand>
        <name>ATP</name>
        <dbReference type="ChEBI" id="CHEBI:30616"/>
    </ligand>
</feature>